<keyword id="KW-0010">Activator</keyword>
<keyword id="KW-0238">DNA-binding</keyword>
<keyword id="KW-0804">Transcription</keyword>
<keyword id="KW-0805">Transcription regulation</keyword>
<proteinExistence type="inferred from homology"/>
<accession>A8GK78</accession>
<name>FIS_SERP5</name>
<dbReference type="EMBL" id="CP000826">
    <property type="protein sequence ID" value="ABV43518.1"/>
    <property type="molecule type" value="Genomic_DNA"/>
</dbReference>
<dbReference type="SMR" id="A8GK78"/>
<dbReference type="STRING" id="399741.Spro_4424"/>
<dbReference type="KEGG" id="spe:Spro_4424"/>
<dbReference type="eggNOG" id="COG2901">
    <property type="taxonomic scope" value="Bacteria"/>
</dbReference>
<dbReference type="HOGENOM" id="CLU_158040_3_0_6"/>
<dbReference type="OrthoDB" id="9802388at2"/>
<dbReference type="GO" id="GO:0003700">
    <property type="term" value="F:DNA-binding transcription factor activity"/>
    <property type="evidence" value="ECO:0007669"/>
    <property type="project" value="UniProtKB-UniRule"/>
</dbReference>
<dbReference type="GO" id="GO:0043565">
    <property type="term" value="F:sequence-specific DNA binding"/>
    <property type="evidence" value="ECO:0007669"/>
    <property type="project" value="InterPro"/>
</dbReference>
<dbReference type="FunFam" id="1.10.10.60:FF:000006">
    <property type="entry name" value="DNA-binding protein Fis"/>
    <property type="match status" value="1"/>
</dbReference>
<dbReference type="Gene3D" id="1.10.10.60">
    <property type="entry name" value="Homeodomain-like"/>
    <property type="match status" value="1"/>
</dbReference>
<dbReference type="HAMAP" id="MF_00166">
    <property type="entry name" value="DNA_binding_Fis"/>
    <property type="match status" value="1"/>
</dbReference>
<dbReference type="InterPro" id="IPR005412">
    <property type="entry name" value="Fis_DNA-bd"/>
</dbReference>
<dbReference type="InterPro" id="IPR009057">
    <property type="entry name" value="Homeodomain-like_sf"/>
</dbReference>
<dbReference type="InterPro" id="IPR002197">
    <property type="entry name" value="HTH_Fis"/>
</dbReference>
<dbReference type="InterPro" id="IPR050207">
    <property type="entry name" value="Trans_regulatory_Fis"/>
</dbReference>
<dbReference type="NCBIfam" id="NF001659">
    <property type="entry name" value="PRK00430.1"/>
    <property type="match status" value="1"/>
</dbReference>
<dbReference type="PANTHER" id="PTHR47918">
    <property type="entry name" value="DNA-BINDING PROTEIN FIS"/>
    <property type="match status" value="1"/>
</dbReference>
<dbReference type="PANTHER" id="PTHR47918:SF1">
    <property type="entry name" value="DNA-BINDING PROTEIN FIS"/>
    <property type="match status" value="1"/>
</dbReference>
<dbReference type="Pfam" id="PF02954">
    <property type="entry name" value="HTH_8"/>
    <property type="match status" value="1"/>
</dbReference>
<dbReference type="PIRSF" id="PIRSF002097">
    <property type="entry name" value="DNA-binding_Fis"/>
    <property type="match status" value="1"/>
</dbReference>
<dbReference type="PRINTS" id="PR01591">
    <property type="entry name" value="DNABINDNGFIS"/>
</dbReference>
<dbReference type="PRINTS" id="PR01590">
    <property type="entry name" value="HTHFIS"/>
</dbReference>
<dbReference type="SUPFAM" id="SSF46689">
    <property type="entry name" value="Homeodomain-like"/>
    <property type="match status" value="1"/>
</dbReference>
<protein>
    <recommendedName>
        <fullName evidence="1">DNA-binding protein Fis</fullName>
    </recommendedName>
</protein>
<evidence type="ECO:0000255" key="1">
    <source>
        <dbReference type="HAMAP-Rule" id="MF_00166"/>
    </source>
</evidence>
<feature type="chain" id="PRO_1000058263" description="DNA-binding protein Fis">
    <location>
        <begin position="1"/>
        <end position="98"/>
    </location>
</feature>
<feature type="DNA-binding region" description="H-T-H motif" evidence="1">
    <location>
        <begin position="74"/>
        <end position="93"/>
    </location>
</feature>
<organism>
    <name type="scientific">Serratia proteamaculans (strain 568)</name>
    <dbReference type="NCBI Taxonomy" id="399741"/>
    <lineage>
        <taxon>Bacteria</taxon>
        <taxon>Pseudomonadati</taxon>
        <taxon>Pseudomonadota</taxon>
        <taxon>Gammaproteobacteria</taxon>
        <taxon>Enterobacterales</taxon>
        <taxon>Yersiniaceae</taxon>
        <taxon>Serratia</taxon>
    </lineage>
</organism>
<comment type="function">
    <text evidence="1">Activates ribosomal RNA transcription. Plays a direct role in upstream activation of rRNA promoters.</text>
</comment>
<comment type="subunit">
    <text evidence="1">Homodimer.</text>
</comment>
<comment type="similarity">
    <text evidence="1">Belongs to the transcriptional regulatory Fis family.</text>
</comment>
<reference key="1">
    <citation type="submission" date="2007-09" db="EMBL/GenBank/DDBJ databases">
        <title>Complete sequence of chromosome of Serratia proteamaculans 568.</title>
        <authorList>
            <consortium name="US DOE Joint Genome Institute"/>
            <person name="Copeland A."/>
            <person name="Lucas S."/>
            <person name="Lapidus A."/>
            <person name="Barry K."/>
            <person name="Glavina del Rio T."/>
            <person name="Dalin E."/>
            <person name="Tice H."/>
            <person name="Pitluck S."/>
            <person name="Chain P."/>
            <person name="Malfatti S."/>
            <person name="Shin M."/>
            <person name="Vergez L."/>
            <person name="Schmutz J."/>
            <person name="Larimer F."/>
            <person name="Land M."/>
            <person name="Hauser L."/>
            <person name="Kyrpides N."/>
            <person name="Kim E."/>
            <person name="Taghavi S."/>
            <person name="Newman L."/>
            <person name="Vangronsveld J."/>
            <person name="van der Lelie D."/>
            <person name="Richardson P."/>
        </authorList>
    </citation>
    <scope>NUCLEOTIDE SEQUENCE [LARGE SCALE GENOMIC DNA]</scope>
    <source>
        <strain>568</strain>
    </source>
</reference>
<sequence>MFEQRVNSDVLTVSTVNSQDQVTQKPLRDSVKQALKNYFAQLNGQDVNDLYELVLAEVEQPLLDMVMQYTRGNQTRAALMMGINRGTLRKKLKKYGMN</sequence>
<gene>
    <name evidence="1" type="primary">fis</name>
    <name type="ordered locus">Spro_4424</name>
</gene>